<accession>Q5M9H1</accession>
<comment type="function">
    <text evidence="1">Probable substrate recognition component of an ECS (Elongin BC-CUL2/5-SOCS-box protein) E3 ubiquitin ligase complex which mediates the ubiquitination and subsequent proteasomal degradation of target proteins.</text>
</comment>
<comment type="pathway">
    <text>Protein modification; protein ubiquitination.</text>
</comment>
<comment type="subunit">
    <text evidence="1">Part of an E3 ubiquitin-protein ligase complex with Elongin BC (ELOB and ELOC), RBX1 and CUL5. Component of a probable ECS(LRRC41) complex which contains CUL5, RNF7/RBX2, Elongin BC and LRRC41. Interacts with CUL5, RNF7, ELOB and ELOC (By similarity).</text>
</comment>
<comment type="domain">
    <text evidence="1">The Elongin BC complex binding domain is also known as BC-box with the consensus [APST]-L-x(3)-C-x(3)-[AILV].</text>
</comment>
<comment type="caution">
    <text evidence="4">It is uncertain whether Met-1 or Met-23 is the initiator.</text>
</comment>
<proteinExistence type="evidence at transcript level"/>
<dbReference type="EMBL" id="BC087037">
    <property type="protein sequence ID" value="AAH87037.1"/>
    <property type="molecule type" value="mRNA"/>
</dbReference>
<dbReference type="RefSeq" id="NP_001009710.1">
    <property type="nucleotide sequence ID" value="NM_001009710.2"/>
</dbReference>
<dbReference type="SMR" id="Q5M9H1"/>
<dbReference type="BioGRID" id="263543">
    <property type="interactions" value="2"/>
</dbReference>
<dbReference type="CORUM" id="Q5M9H1"/>
<dbReference type="FunCoup" id="Q5M9H1">
    <property type="interactions" value="3298"/>
</dbReference>
<dbReference type="STRING" id="10116.ENSRNOP00000018506"/>
<dbReference type="iPTMnet" id="Q5M9H1"/>
<dbReference type="PhosphoSitePlus" id="Q5M9H1"/>
<dbReference type="PaxDb" id="10116-ENSRNOP00000018506"/>
<dbReference type="Ensembl" id="ENSRNOT00000018506.6">
    <property type="protein sequence ID" value="ENSRNOP00000018506.5"/>
    <property type="gene ID" value="ENSRNOG00000013642.6"/>
</dbReference>
<dbReference type="GeneID" id="362566"/>
<dbReference type="KEGG" id="rno:362566"/>
<dbReference type="UCSC" id="RGD:1311221">
    <property type="organism name" value="rat"/>
</dbReference>
<dbReference type="AGR" id="RGD:1311221"/>
<dbReference type="CTD" id="10489"/>
<dbReference type="RGD" id="1311221">
    <property type="gene designation" value="Lrrc41"/>
</dbReference>
<dbReference type="eggNOG" id="ENOG502R5T0">
    <property type="taxonomic scope" value="Eukaryota"/>
</dbReference>
<dbReference type="GeneTree" id="ENSGT00390000015908"/>
<dbReference type="HOGENOM" id="CLU_021836_0_0_1"/>
<dbReference type="InParanoid" id="Q5M9H1"/>
<dbReference type="OMA" id="VVSDSWH"/>
<dbReference type="OrthoDB" id="9415738at2759"/>
<dbReference type="PhylomeDB" id="Q5M9H1"/>
<dbReference type="TreeFam" id="TF335481"/>
<dbReference type="Reactome" id="R-RNO-8951664">
    <property type="pathway name" value="Neddylation"/>
</dbReference>
<dbReference type="Reactome" id="R-RNO-9706019">
    <property type="pathway name" value="RHOBTB3 ATPase cycle"/>
</dbReference>
<dbReference type="Reactome" id="R-RNO-983168">
    <property type="pathway name" value="Antigen processing: Ubiquitination &amp; Proteasome degradation"/>
</dbReference>
<dbReference type="UniPathway" id="UPA00143"/>
<dbReference type="PRO" id="PR:Q5M9H1"/>
<dbReference type="Proteomes" id="UP000002494">
    <property type="component" value="Chromosome 5"/>
</dbReference>
<dbReference type="Bgee" id="ENSRNOG00000013642">
    <property type="expression patterns" value="Expressed in ovary and 19 other cell types or tissues"/>
</dbReference>
<dbReference type="GO" id="GO:0005737">
    <property type="term" value="C:cytoplasm"/>
    <property type="evidence" value="ECO:0000266"/>
    <property type="project" value="RGD"/>
</dbReference>
<dbReference type="GO" id="GO:0005634">
    <property type="term" value="C:nucleus"/>
    <property type="evidence" value="ECO:0000266"/>
    <property type="project" value="RGD"/>
</dbReference>
<dbReference type="GO" id="GO:0042802">
    <property type="term" value="F:identical protein binding"/>
    <property type="evidence" value="ECO:0000266"/>
    <property type="project" value="RGD"/>
</dbReference>
<dbReference type="GO" id="GO:0016567">
    <property type="term" value="P:protein ubiquitination"/>
    <property type="evidence" value="ECO:0007669"/>
    <property type="project" value="UniProtKB-UniPathway"/>
</dbReference>
<dbReference type="FunFam" id="3.80.10.10:FF:000114">
    <property type="entry name" value="leucine-rich repeat-containing protein 41 isoform X1"/>
    <property type="match status" value="1"/>
</dbReference>
<dbReference type="FunFam" id="3.80.10.10:FF:000088">
    <property type="entry name" value="Putative leucine-rich repeat-containing protein 41"/>
    <property type="match status" value="1"/>
</dbReference>
<dbReference type="Gene3D" id="3.80.10.10">
    <property type="entry name" value="Ribonuclease Inhibitor"/>
    <property type="match status" value="2"/>
</dbReference>
<dbReference type="InterPro" id="IPR026137">
    <property type="entry name" value="Leu_rpt_41"/>
</dbReference>
<dbReference type="InterPro" id="IPR032675">
    <property type="entry name" value="LRR_dom_sf"/>
</dbReference>
<dbReference type="PANTHER" id="PTHR15354:SF1">
    <property type="entry name" value="LEUCINE-RICH REPEAT-CONTAINING PROTEIN 41"/>
    <property type="match status" value="1"/>
</dbReference>
<dbReference type="PANTHER" id="PTHR15354">
    <property type="entry name" value="MUF1"/>
    <property type="match status" value="1"/>
</dbReference>
<dbReference type="SMART" id="SM00368">
    <property type="entry name" value="LRR_RI"/>
    <property type="match status" value="3"/>
</dbReference>
<dbReference type="SUPFAM" id="SSF52047">
    <property type="entry name" value="RNI-like"/>
    <property type="match status" value="1"/>
</dbReference>
<protein>
    <recommendedName>
        <fullName>Leucine-rich repeat-containing protein 41</fullName>
    </recommendedName>
</protein>
<reference key="1">
    <citation type="journal article" date="2004" name="Genome Res.">
        <title>The status, quality, and expansion of the NIH full-length cDNA project: the Mammalian Gene Collection (MGC).</title>
        <authorList>
            <consortium name="The MGC Project Team"/>
        </authorList>
    </citation>
    <scope>NUCLEOTIDE SEQUENCE [LARGE SCALE MRNA]</scope>
    <source>
        <tissue>Testis</tissue>
    </source>
</reference>
<sequence>MAAPEAWRARSCWFCEVAAATTMEATSREAAPAKSSASGPSAPPALFELCGRAVSAHMGVLESGVWALPGPILQSILPLLNIYYLERIEETALKKGLSTQAIWRRLWDELMKTRPSSLESVTCWRAKFMEAFFSHVLRGTIDVSSDKRLCDQRFSPLLHSSRHVRQLTICNMLQGATELVAEPNRRVLETLASSLHTLKFRHLLFSDVAAQQSLRQLLHQLIHHGAVSQVSLYSWPVPESALFILILTMSAGFWQPGPGSLPCRLCGEASRGRAPSRDEGSLLLGSRRPRRDAAERCAAALMATRRKSEVKQVPRALPTSRVTRRSTQESLTIGGTDSKRELYPPATSYEASGTKQPSSAPTAASSSTSSKRAPASSVSQPKPLKRFKRATGKKGPRTRQGSGAESEDLYDFVFIVAGEKEDGEEMEIGEVACGALDGSDPSCLGLPALEASQRFRSISTLELFTVPLSTEAALTLCHLLSSWVSLESLTLSYNGLGSNIFRLLDSLRVLSGQAGCRLRALHLSDLFSPLPILELTRAIVRALPLLRVLSIRVDHPSQRDNPAVPENAGPPGHIIGDEEIPENCLEQLEMGFPRGAQPAPLLCSVLKASGSLQQLSLDSATFASPQDFGLVLQTLKEYNLSLKRLSFHDMNLADCQSEVLFLLKNLTLQEITFSFCRLFEKRPAQFLPEMVAAMKGNSTLKGLRLPGNRLGNAGLLALADVFSEDSSSSLCQLDISSNCIKPDGLLEFAKRLERWGRGAFGHLRLFQNWLDQDAVTAREAIRRLRATCHVVSDSWDSTQAFADYVSTM</sequence>
<evidence type="ECO:0000250" key="1"/>
<evidence type="ECO:0000250" key="2">
    <source>
        <dbReference type="UniProtKB" id="Q15345"/>
    </source>
</evidence>
<evidence type="ECO:0000256" key="3">
    <source>
        <dbReference type="SAM" id="MobiDB-lite"/>
    </source>
</evidence>
<evidence type="ECO:0000305" key="4"/>
<keyword id="KW-0433">Leucine-rich repeat</keyword>
<keyword id="KW-0597">Phosphoprotein</keyword>
<keyword id="KW-1185">Reference proteome</keyword>
<keyword id="KW-0677">Repeat</keyword>
<keyword id="KW-0833">Ubl conjugation pathway</keyword>
<feature type="chain" id="PRO_0000292659" description="Leucine-rich repeat-containing protein 41">
    <location>
        <begin position="1"/>
        <end position="808"/>
    </location>
</feature>
<feature type="repeat" description="LRR 1">
    <location>
        <begin position="483"/>
        <end position="503"/>
    </location>
</feature>
<feature type="repeat" description="LRR 2">
    <location>
        <begin position="514"/>
        <end position="526"/>
    </location>
</feature>
<feature type="repeat" description="LRR 3">
    <location>
        <begin position="527"/>
        <end position="551"/>
    </location>
</feature>
<feature type="repeat" description="LRR 4">
    <location>
        <begin position="609"/>
        <end position="631"/>
    </location>
</feature>
<feature type="repeat" description="LRR 5">
    <location>
        <begin position="632"/>
        <end position="655"/>
    </location>
</feature>
<feature type="repeat" description="LRR 6">
    <location>
        <begin position="697"/>
        <end position="724"/>
    </location>
</feature>
<feature type="repeat" description="LRR 7">
    <location>
        <begin position="727"/>
        <end position="748"/>
    </location>
</feature>
<feature type="region of interest" description="Interaction with Elongin BC complex" evidence="1">
    <location>
        <begin position="45"/>
        <end position="54"/>
    </location>
</feature>
<feature type="region of interest" description="Disordered" evidence="3">
    <location>
        <begin position="269"/>
        <end position="289"/>
    </location>
</feature>
<feature type="region of interest" description="Disordered" evidence="3">
    <location>
        <begin position="304"/>
        <end position="404"/>
    </location>
</feature>
<feature type="compositionally biased region" description="Low complexity" evidence="3">
    <location>
        <begin position="357"/>
        <end position="379"/>
    </location>
</feature>
<feature type="compositionally biased region" description="Basic residues" evidence="3">
    <location>
        <begin position="383"/>
        <end position="397"/>
    </location>
</feature>
<feature type="modified residue" description="Phosphoserine" evidence="2">
    <location>
        <position position="155"/>
    </location>
</feature>
<feature type="modified residue" description="Phosphoserine" evidence="2">
    <location>
        <position position="276"/>
    </location>
</feature>
<feature type="modified residue" description="Phosphoserine" evidence="2">
    <location>
        <position position="326"/>
    </location>
</feature>
<feature type="modified residue" description="Phosphothreonine" evidence="2">
    <location>
        <position position="327"/>
    </location>
</feature>
<feature type="modified residue" description="Phosphoserine" evidence="2">
    <location>
        <position position="369"/>
    </location>
</feature>
<organism>
    <name type="scientific">Rattus norvegicus</name>
    <name type="common">Rat</name>
    <dbReference type="NCBI Taxonomy" id="10116"/>
    <lineage>
        <taxon>Eukaryota</taxon>
        <taxon>Metazoa</taxon>
        <taxon>Chordata</taxon>
        <taxon>Craniata</taxon>
        <taxon>Vertebrata</taxon>
        <taxon>Euteleostomi</taxon>
        <taxon>Mammalia</taxon>
        <taxon>Eutheria</taxon>
        <taxon>Euarchontoglires</taxon>
        <taxon>Glires</taxon>
        <taxon>Rodentia</taxon>
        <taxon>Myomorpha</taxon>
        <taxon>Muroidea</taxon>
        <taxon>Muridae</taxon>
        <taxon>Murinae</taxon>
        <taxon>Rattus</taxon>
    </lineage>
</organism>
<gene>
    <name type="primary">Lrrc41</name>
</gene>
<name>LRC41_RAT</name>